<sequence length="173" mass="18793">MANITVFYNEDFQGKQVDLPPGNYTRAQLAALGIENNTISSVKVPPGVKAILYQNDGFAGDQIEVVANAEELGPLNNNVSSIRVISVPVQPRARFFYKEQFDGKEVDLPPGQYTQAELERYGIDNNTISSVKPQGLAVVLFKNDNFSGDTLPVNSDAPTLGAMNNNTSSIRIS</sequence>
<dbReference type="EMBL" id="J01745">
    <property type="protein sequence ID" value="AAA25407.1"/>
    <property type="molecule type" value="Genomic_DNA"/>
</dbReference>
<dbReference type="PIR" id="A03490">
    <property type="entry name" value="DZYZSX"/>
</dbReference>
<dbReference type="RefSeq" id="WP_020477824.1">
    <property type="nucleotide sequence ID" value="NZ_JABFNQ010000113.1"/>
</dbReference>
<dbReference type="PDB" id="1NPS">
    <property type="method" value="X-ray"/>
    <property type="resolution" value="1.80 A"/>
    <property type="chains" value="A=2-89"/>
</dbReference>
<dbReference type="PDB" id="1PRR">
    <property type="method" value="NMR"/>
    <property type="chains" value="A=1-173"/>
</dbReference>
<dbReference type="PDB" id="1PRS">
    <property type="method" value="NMR"/>
    <property type="chains" value="A=1-173"/>
</dbReference>
<dbReference type="PDBsum" id="1NPS"/>
<dbReference type="PDBsum" id="1PRR"/>
<dbReference type="PDBsum" id="1PRS"/>
<dbReference type="SMR" id="P02966"/>
<dbReference type="EvolutionaryTrace" id="P02966"/>
<dbReference type="GO" id="GO:0046872">
    <property type="term" value="F:metal ion binding"/>
    <property type="evidence" value="ECO:0007669"/>
    <property type="project" value="UniProtKB-KW"/>
</dbReference>
<dbReference type="GO" id="GO:0030435">
    <property type="term" value="P:sporulation resulting in formation of a cellular spore"/>
    <property type="evidence" value="ECO:0007669"/>
    <property type="project" value="UniProtKB-KW"/>
</dbReference>
<dbReference type="Gene3D" id="2.60.20.10">
    <property type="entry name" value="Crystallins"/>
    <property type="match status" value="2"/>
</dbReference>
<dbReference type="InterPro" id="IPR001064">
    <property type="entry name" value="Beta/gamma_crystallin"/>
</dbReference>
<dbReference type="InterPro" id="IPR011024">
    <property type="entry name" value="G_crystallin-like"/>
</dbReference>
<dbReference type="Pfam" id="PF00030">
    <property type="entry name" value="Crystall"/>
    <property type="match status" value="1"/>
</dbReference>
<dbReference type="SMART" id="SM00247">
    <property type="entry name" value="XTALbg"/>
    <property type="match status" value="2"/>
</dbReference>
<dbReference type="SUPFAM" id="SSF49695">
    <property type="entry name" value="gamma-Crystallin-like"/>
    <property type="match status" value="2"/>
</dbReference>
<dbReference type="PROSITE" id="PS50915">
    <property type="entry name" value="CRYSTALLIN_BETA_GAMMA"/>
    <property type="match status" value="4"/>
</dbReference>
<accession>P02966</accession>
<evidence type="ECO:0000255" key="1">
    <source>
        <dbReference type="PROSITE-ProRule" id="PRU00028"/>
    </source>
</evidence>
<evidence type="ECO:0000269" key="2">
    <source>
    </source>
</evidence>
<evidence type="ECO:0000269" key="3">
    <source>
    </source>
</evidence>
<evidence type="ECO:0000305" key="4"/>
<evidence type="ECO:0007744" key="5">
    <source>
        <dbReference type="PDB" id="1NPS"/>
    </source>
</evidence>
<evidence type="ECO:0007829" key="6">
    <source>
        <dbReference type="PDB" id="1NPS"/>
    </source>
</evidence>
<evidence type="ECO:0007829" key="7">
    <source>
        <dbReference type="PDB" id="1PRR"/>
    </source>
</evidence>
<evidence type="ECO:0007829" key="8">
    <source>
        <dbReference type="PDB" id="1PRS"/>
    </source>
</evidence>
<feature type="chain" id="PRO_0000057606" description="Development-specific protein S">
    <location>
        <begin position="1"/>
        <end position="173"/>
    </location>
</feature>
<feature type="domain" description="Beta/gamma crystallin 'Greek key' 1" evidence="1">
    <location>
        <begin position="2"/>
        <end position="46"/>
    </location>
</feature>
<feature type="domain" description="Beta/gamma crystallin 'Greek key' 2" evidence="1">
    <location>
        <begin position="48"/>
        <end position="86"/>
    </location>
</feature>
<feature type="domain" description="Beta/gamma crystallin 'Greek key' 3" evidence="1">
    <location>
        <begin position="91"/>
        <end position="135"/>
    </location>
</feature>
<feature type="domain" description="Beta/gamma crystallin 'Greek key' 4" evidence="1">
    <location>
        <begin position="136"/>
        <end position="173"/>
    </location>
</feature>
<feature type="region of interest" description="Connecting peptide">
    <location>
        <begin position="87"/>
        <end position="90"/>
    </location>
</feature>
<feature type="binding site" evidence="2 5">
    <location>
        <position position="8"/>
    </location>
    <ligand>
        <name>Ca(2+)</name>
        <dbReference type="ChEBI" id="CHEBI:29108"/>
        <label>1</label>
    </ligand>
</feature>
<feature type="binding site" evidence="2 5">
    <location>
        <position position="37"/>
    </location>
    <ligand>
        <name>Ca(2+)</name>
        <dbReference type="ChEBI" id="CHEBI:29108"/>
        <label>2</label>
    </ligand>
</feature>
<feature type="binding site" evidence="2 5">
    <location>
        <position position="38"/>
    </location>
    <ligand>
        <name>Ca(2+)</name>
        <dbReference type="ChEBI" id="CHEBI:29108"/>
        <label>1</label>
    </ligand>
</feature>
<feature type="binding site" evidence="2 5">
    <location>
        <position position="40"/>
    </location>
    <ligand>
        <name>Ca(2+)</name>
        <dbReference type="ChEBI" id="CHEBI:29108"/>
        <label>1</label>
    </ligand>
</feature>
<feature type="binding site" evidence="2 5">
    <location>
        <position position="54"/>
    </location>
    <ligand>
        <name>Ca(2+)</name>
        <dbReference type="ChEBI" id="CHEBI:29108"/>
        <label>2</label>
    </ligand>
</feature>
<feature type="binding site" evidence="2 5">
    <location>
        <position position="77"/>
    </location>
    <ligand>
        <name>Ca(2+)</name>
        <dbReference type="ChEBI" id="CHEBI:29108"/>
        <label>1</label>
    </ligand>
</feature>
<feature type="binding site" evidence="2 5">
    <location>
        <position position="78"/>
    </location>
    <ligand>
        <name>Ca(2+)</name>
        <dbReference type="ChEBI" id="CHEBI:29108"/>
        <label>2</label>
    </ligand>
</feature>
<feature type="binding site" evidence="2 5">
    <location>
        <position position="80"/>
    </location>
    <ligand>
        <name>Ca(2+)</name>
        <dbReference type="ChEBI" id="CHEBI:29108"/>
        <label>2</label>
    </ligand>
</feature>
<feature type="mutagenesis site" description="Suppresses completely calcium-binding." evidence="3">
    <original>S</original>
    <variation>R</variation>
    <location>
        <position position="40"/>
    </location>
</feature>
<feature type="mutagenesis site" description="Lower calcium affinity." evidence="3">
    <original>S</original>
    <variation>R</variation>
    <location>
        <position position="129"/>
    </location>
</feature>
<feature type="strand" evidence="6">
    <location>
        <begin position="4"/>
        <end position="9"/>
    </location>
</feature>
<feature type="turn" evidence="6">
    <location>
        <begin position="10"/>
        <end position="12"/>
    </location>
</feature>
<feature type="strand" evidence="6">
    <location>
        <begin position="13"/>
        <end position="19"/>
    </location>
</feature>
<feature type="strand" evidence="6">
    <location>
        <begin position="21"/>
        <end position="24"/>
    </location>
</feature>
<feature type="helix" evidence="6">
    <location>
        <begin position="26"/>
        <end position="31"/>
    </location>
</feature>
<feature type="strand" evidence="6">
    <location>
        <begin position="41"/>
        <end position="43"/>
    </location>
</feature>
<feature type="strand" evidence="6">
    <location>
        <begin position="48"/>
        <end position="55"/>
    </location>
</feature>
<feature type="turn" evidence="6">
    <location>
        <begin position="56"/>
        <end position="58"/>
    </location>
</feature>
<feature type="strand" evidence="6">
    <location>
        <begin position="59"/>
        <end position="67"/>
    </location>
</feature>
<feature type="helix" evidence="6">
    <location>
        <begin position="73"/>
        <end position="75"/>
    </location>
</feature>
<feature type="strand" evidence="6">
    <location>
        <begin position="81"/>
        <end position="86"/>
    </location>
</feature>
<feature type="strand" evidence="7">
    <location>
        <begin position="93"/>
        <end position="95"/>
    </location>
</feature>
<feature type="turn" evidence="7">
    <location>
        <begin position="99"/>
        <end position="101"/>
    </location>
</feature>
<feature type="strand" evidence="7">
    <location>
        <begin position="106"/>
        <end position="108"/>
    </location>
</feature>
<feature type="strand" evidence="7">
    <location>
        <begin position="110"/>
        <end position="113"/>
    </location>
</feature>
<feature type="turn" evidence="8">
    <location>
        <begin position="115"/>
        <end position="118"/>
    </location>
</feature>
<feature type="helix" evidence="7">
    <location>
        <begin position="119"/>
        <end position="122"/>
    </location>
</feature>
<feature type="strand" evidence="7">
    <location>
        <begin position="134"/>
        <end position="144"/>
    </location>
</feature>
<feature type="strand" evidence="7">
    <location>
        <begin position="148"/>
        <end position="153"/>
    </location>
</feature>
<feature type="strand" evidence="7">
    <location>
        <begin position="161"/>
        <end position="165"/>
    </location>
</feature>
<feature type="strand" evidence="7">
    <location>
        <begin position="169"/>
        <end position="173"/>
    </location>
</feature>
<keyword id="KW-0002">3D-structure</keyword>
<keyword id="KW-0106">Calcium</keyword>
<keyword id="KW-0479">Metal-binding</keyword>
<keyword id="KW-0677">Repeat</keyword>
<keyword id="KW-0749">Sporulation</keyword>
<reference key="1">
    <citation type="journal article" date="1983" name="Proc. Natl. Acad. Sci. U.S.A.">
        <title>Structural similarities between the development-specific protein S from a Gram-negative bacterium, Myxococcus xanthus, and calmodulin.</title>
        <authorList>
            <person name="Inouye S."/>
            <person name="Franceschini T."/>
            <person name="Inouye M."/>
        </authorList>
    </citation>
    <scope>NUCLEOTIDE SEQUENCE [GENOMIC DNA]</scope>
</reference>
<reference key="2">
    <citation type="journal article" date="1988" name="J. Biol. Chem.">
        <title>Characterization of calcium-binding sites in development-specific protein S of Myxococcus xanthus using site-specific mutagenesis.</title>
        <authorList>
            <person name="Teintze M."/>
            <person name="Inouye M."/>
            <person name="Inouye S."/>
        </authorList>
    </citation>
    <scope>CALCIUM-BINDING SITES</scope>
    <scope>MUTAGENESIS</scope>
</reference>
<reference key="3">
    <citation type="journal article" date="1985" name="Nature">
        <title>Myxococcus xanthus spore coat protein S may have a similar structure to vertebrate lens beta gamma-crystallins.</title>
        <authorList>
            <person name="Wistow G."/>
            <person name="Summers L."/>
            <person name="Blundell T."/>
        </authorList>
    </citation>
    <scope>SIMILARITY TO BETA/GAMMA-CRYSTALLIN FAMILY</scope>
</reference>
<reference key="4">
    <citation type="journal article" date="1994" name="Proc. Natl. Acad. Sci. U.S.A.">
        <title>Structural similarity of a developmentally regulated bacterial spore coat protein to beta gamma-crystallins of the vertebrate eye lens.</title>
        <authorList>
            <person name="Bagby S."/>
            <person name="Harvey T.S."/>
            <person name="Eagle S.G."/>
            <person name="Inouye S."/>
            <person name="Ikura M."/>
        </authorList>
    </citation>
    <scope>STRUCTURE BY NMR</scope>
</reference>
<reference key="5">
    <citation type="journal article" date="1994" name="Structure">
        <title>NMR-derived three-dimensional solution structure of protein S complexed with calcium.</title>
        <authorList>
            <person name="Bagby S."/>
            <person name="Harvey T.S."/>
            <person name="Eagle S.G."/>
            <person name="Inouye S."/>
            <person name="Ikura M."/>
        </authorList>
    </citation>
    <scope>STRUCTURE BY NMR</scope>
</reference>
<reference evidence="5" key="6">
    <citation type="journal article" date="1999" name="J. Mol. Biol.">
        <title>The domains of protein S from Myxococcus xanthus: structure, stability and interactions.</title>
        <authorList>
            <person name="Wenk M."/>
            <person name="Baumgartner R."/>
            <person name="Holak T.A."/>
            <person name="Huber R."/>
            <person name="Jaenicke R."/>
            <person name="Mayr E.M."/>
        </authorList>
    </citation>
    <scope>X-RAY CRYSTALLOGRAPHY (1.80 ANGSTROMS) OF 2-89 IN COMPLEX WITH CALCIUM</scope>
</reference>
<protein>
    <recommendedName>
        <fullName>Development-specific protein S</fullName>
    </recommendedName>
    <alternativeName>
        <fullName>Spore coat protein S</fullName>
    </alternativeName>
</protein>
<proteinExistence type="evidence at protein level"/>
<gene>
    <name type="primary">tps</name>
</gene>
<name>DESS_MYXXA</name>
<organism>
    <name type="scientific">Myxococcus xanthus</name>
    <dbReference type="NCBI Taxonomy" id="34"/>
    <lineage>
        <taxon>Bacteria</taxon>
        <taxon>Pseudomonadati</taxon>
        <taxon>Myxococcota</taxon>
        <taxon>Myxococcia</taxon>
        <taxon>Myxococcales</taxon>
        <taxon>Cystobacterineae</taxon>
        <taxon>Myxococcaceae</taxon>
        <taxon>Myxococcus</taxon>
    </lineage>
</organism>
<comment type="function">
    <text>Protein S, induced in large amounts during fruiting body formation, assembles on the surface of myxospores in the presence of calcium ions.</text>
</comment>
<comment type="domain">
    <text evidence="2">Has a two-domain beta-structure, folded into four very similar Greek key motifs. The N-terminal domain (NPS) binds 2 calcium ions.</text>
</comment>
<comment type="similarity">
    <text evidence="4">Belongs to the beta/gamma-crystallin family.</text>
</comment>